<comment type="function">
    <text evidence="1">RNA chaperone that binds small regulatory RNA (sRNAs) and mRNAs to facilitate mRNA translational regulation in response to envelope stress, environmental stress and changes in metabolite concentrations. Also binds with high specificity to tRNAs.</text>
</comment>
<comment type="subunit">
    <text evidence="1">Homohexamer.</text>
</comment>
<comment type="similarity">
    <text evidence="1">Belongs to the Hfq family.</text>
</comment>
<evidence type="ECO:0000255" key="1">
    <source>
        <dbReference type="HAMAP-Rule" id="MF_00436"/>
    </source>
</evidence>
<evidence type="ECO:0000255" key="2">
    <source>
        <dbReference type="PROSITE-ProRule" id="PRU01346"/>
    </source>
</evidence>
<feature type="chain" id="PRO_1000080675" description="RNA-binding protein Hfq">
    <location>
        <begin position="1"/>
        <end position="82"/>
    </location>
</feature>
<feature type="domain" description="Sm" evidence="2">
    <location>
        <begin position="10"/>
        <end position="70"/>
    </location>
</feature>
<reference key="1">
    <citation type="journal article" date="2011" name="Stand. Genomic Sci.">
        <title>Complete genome sequence of Parvibaculum lavamentivorans type strain (DS-1(T)).</title>
        <authorList>
            <person name="Schleheck D."/>
            <person name="Weiss M."/>
            <person name="Pitluck S."/>
            <person name="Bruce D."/>
            <person name="Land M.L."/>
            <person name="Han S."/>
            <person name="Saunders E."/>
            <person name="Tapia R."/>
            <person name="Detter C."/>
            <person name="Brettin T."/>
            <person name="Han J."/>
            <person name="Woyke T."/>
            <person name="Goodwin L."/>
            <person name="Pennacchio L."/>
            <person name="Nolan M."/>
            <person name="Cook A.M."/>
            <person name="Kjelleberg S."/>
            <person name="Thomas T."/>
        </authorList>
    </citation>
    <scope>NUCLEOTIDE SEQUENCE [LARGE SCALE GENOMIC DNA]</scope>
    <source>
        <strain>DS-1 / DSM 13023 / NCIMB 13966</strain>
    </source>
</reference>
<accession>A7HXU8</accession>
<dbReference type="EMBL" id="CP000774">
    <property type="protein sequence ID" value="ABS64731.1"/>
    <property type="molecule type" value="Genomic_DNA"/>
</dbReference>
<dbReference type="RefSeq" id="WP_012112053.1">
    <property type="nucleotide sequence ID" value="NC_009719.1"/>
</dbReference>
<dbReference type="SMR" id="A7HXU8"/>
<dbReference type="STRING" id="402881.Plav_3124"/>
<dbReference type="KEGG" id="pla:Plav_3124"/>
<dbReference type="eggNOG" id="COG1923">
    <property type="taxonomic scope" value="Bacteria"/>
</dbReference>
<dbReference type="HOGENOM" id="CLU_113688_0_0_5"/>
<dbReference type="OrthoDB" id="9799751at2"/>
<dbReference type="Proteomes" id="UP000006377">
    <property type="component" value="Chromosome"/>
</dbReference>
<dbReference type="GO" id="GO:0005829">
    <property type="term" value="C:cytosol"/>
    <property type="evidence" value="ECO:0007669"/>
    <property type="project" value="TreeGrafter"/>
</dbReference>
<dbReference type="GO" id="GO:0003723">
    <property type="term" value="F:RNA binding"/>
    <property type="evidence" value="ECO:0007669"/>
    <property type="project" value="UniProtKB-UniRule"/>
</dbReference>
<dbReference type="GO" id="GO:0006355">
    <property type="term" value="P:regulation of DNA-templated transcription"/>
    <property type="evidence" value="ECO:0007669"/>
    <property type="project" value="InterPro"/>
</dbReference>
<dbReference type="GO" id="GO:0043487">
    <property type="term" value="P:regulation of RNA stability"/>
    <property type="evidence" value="ECO:0007669"/>
    <property type="project" value="TreeGrafter"/>
</dbReference>
<dbReference type="GO" id="GO:0045974">
    <property type="term" value="P:regulation of translation, ncRNA-mediated"/>
    <property type="evidence" value="ECO:0007669"/>
    <property type="project" value="TreeGrafter"/>
</dbReference>
<dbReference type="CDD" id="cd01716">
    <property type="entry name" value="Hfq"/>
    <property type="match status" value="1"/>
</dbReference>
<dbReference type="FunFam" id="2.30.30.100:FF:000001">
    <property type="entry name" value="RNA-binding protein Hfq"/>
    <property type="match status" value="1"/>
</dbReference>
<dbReference type="Gene3D" id="2.30.30.100">
    <property type="match status" value="1"/>
</dbReference>
<dbReference type="HAMAP" id="MF_00436">
    <property type="entry name" value="Hfq"/>
    <property type="match status" value="1"/>
</dbReference>
<dbReference type="InterPro" id="IPR005001">
    <property type="entry name" value="Hfq"/>
</dbReference>
<dbReference type="InterPro" id="IPR010920">
    <property type="entry name" value="LSM_dom_sf"/>
</dbReference>
<dbReference type="InterPro" id="IPR047575">
    <property type="entry name" value="Sm"/>
</dbReference>
<dbReference type="NCBIfam" id="TIGR02383">
    <property type="entry name" value="Hfq"/>
    <property type="match status" value="1"/>
</dbReference>
<dbReference type="NCBIfam" id="NF001602">
    <property type="entry name" value="PRK00395.1"/>
    <property type="match status" value="1"/>
</dbReference>
<dbReference type="PANTHER" id="PTHR34772">
    <property type="entry name" value="RNA-BINDING PROTEIN HFQ"/>
    <property type="match status" value="1"/>
</dbReference>
<dbReference type="PANTHER" id="PTHR34772:SF1">
    <property type="entry name" value="RNA-BINDING PROTEIN HFQ"/>
    <property type="match status" value="1"/>
</dbReference>
<dbReference type="Pfam" id="PF17209">
    <property type="entry name" value="Hfq"/>
    <property type="match status" value="1"/>
</dbReference>
<dbReference type="SUPFAM" id="SSF50182">
    <property type="entry name" value="Sm-like ribonucleoproteins"/>
    <property type="match status" value="1"/>
</dbReference>
<dbReference type="PROSITE" id="PS52002">
    <property type="entry name" value="SM"/>
    <property type="match status" value="1"/>
</dbReference>
<keyword id="KW-1185">Reference proteome</keyword>
<keyword id="KW-0694">RNA-binding</keyword>
<keyword id="KW-0346">Stress response</keyword>
<gene>
    <name evidence="1" type="primary">hfq</name>
    <name type="ordered locus">Plav_3124</name>
</gene>
<organism>
    <name type="scientific">Parvibaculum lavamentivorans (strain DS-1 / DSM 13023 / NCIMB 13966)</name>
    <dbReference type="NCBI Taxonomy" id="402881"/>
    <lineage>
        <taxon>Bacteria</taxon>
        <taxon>Pseudomonadati</taxon>
        <taxon>Pseudomonadota</taxon>
        <taxon>Alphaproteobacteria</taxon>
        <taxon>Hyphomicrobiales</taxon>
        <taxon>Parvibaculaceae</taxon>
        <taxon>Parvibaculum</taxon>
    </lineage>
</organism>
<proteinExistence type="inferred from homology"/>
<name>HFQ_PARL1</name>
<sequence>MNEKTHNLQDTFLNHVRKNKTTLTIFLVNGVKLQGVVTWFDNFCVLLRRDGHSQLVYKHAISTIMPAQPVQLFEPEANGEEG</sequence>
<protein>
    <recommendedName>
        <fullName evidence="1">RNA-binding protein Hfq</fullName>
    </recommendedName>
</protein>